<dbReference type="EC" id="6.1.1.2" evidence="7"/>
<dbReference type="EMBL" id="M12081">
    <property type="protein sequence ID" value="AAA34809.1"/>
    <property type="molecule type" value="Genomic_DNA"/>
</dbReference>
<dbReference type="EMBL" id="X66165">
    <property type="protein sequence ID" value="CAA46947.1"/>
    <property type="molecule type" value="Genomic_DNA"/>
</dbReference>
<dbReference type="EMBL" id="U51030">
    <property type="protein sequence ID" value="AAB64452.1"/>
    <property type="molecule type" value="Genomic_DNA"/>
</dbReference>
<dbReference type="EMBL" id="BK006938">
    <property type="protein sequence ID" value="DAA12112.1"/>
    <property type="molecule type" value="Genomic_DNA"/>
</dbReference>
<dbReference type="PIR" id="S70128">
    <property type="entry name" value="YWBYM"/>
</dbReference>
<dbReference type="RefSeq" id="NP_010554.1">
    <property type="nucleotide sequence ID" value="NM_001180576.1"/>
</dbReference>
<dbReference type="SMR" id="P04803"/>
<dbReference type="BioGRID" id="32324">
    <property type="interactions" value="23"/>
</dbReference>
<dbReference type="DIP" id="DIP-4584N"/>
<dbReference type="FunCoup" id="P04803">
    <property type="interactions" value="514"/>
</dbReference>
<dbReference type="IntAct" id="P04803">
    <property type="interactions" value="6"/>
</dbReference>
<dbReference type="STRING" id="4932.YDR268W"/>
<dbReference type="iPTMnet" id="P04803"/>
<dbReference type="PaxDb" id="4932-YDR268W"/>
<dbReference type="PeptideAtlas" id="P04803"/>
<dbReference type="EnsemblFungi" id="YDR268W_mRNA">
    <property type="protein sequence ID" value="YDR268W"/>
    <property type="gene ID" value="YDR268W"/>
</dbReference>
<dbReference type="GeneID" id="851861"/>
<dbReference type="KEGG" id="sce:YDR268W"/>
<dbReference type="AGR" id="SGD:S000002676"/>
<dbReference type="SGD" id="S000002676">
    <property type="gene designation" value="MSW1"/>
</dbReference>
<dbReference type="VEuPathDB" id="FungiDB:YDR268W"/>
<dbReference type="eggNOG" id="KOG2713">
    <property type="taxonomic scope" value="Eukaryota"/>
</dbReference>
<dbReference type="GeneTree" id="ENSGT00940000153724"/>
<dbReference type="HOGENOM" id="CLU_029244_1_3_1"/>
<dbReference type="InParanoid" id="P04803"/>
<dbReference type="OMA" id="GWGQFKP"/>
<dbReference type="OrthoDB" id="15808at2759"/>
<dbReference type="BioCyc" id="YEAST:G3O-29838-MONOMER"/>
<dbReference type="BioGRID-ORCS" id="851861">
    <property type="hits" value="2 hits in 10 CRISPR screens"/>
</dbReference>
<dbReference type="PRO" id="PR:P04803"/>
<dbReference type="Proteomes" id="UP000002311">
    <property type="component" value="Chromosome IV"/>
</dbReference>
<dbReference type="RNAct" id="P04803">
    <property type="molecule type" value="protein"/>
</dbReference>
<dbReference type="GO" id="GO:0005759">
    <property type="term" value="C:mitochondrial matrix"/>
    <property type="evidence" value="ECO:0000318"/>
    <property type="project" value="GO_Central"/>
</dbReference>
<dbReference type="GO" id="GO:0005739">
    <property type="term" value="C:mitochondrion"/>
    <property type="evidence" value="ECO:0000315"/>
    <property type="project" value="SGD"/>
</dbReference>
<dbReference type="GO" id="GO:0005524">
    <property type="term" value="F:ATP binding"/>
    <property type="evidence" value="ECO:0007669"/>
    <property type="project" value="UniProtKB-KW"/>
</dbReference>
<dbReference type="GO" id="GO:0004830">
    <property type="term" value="F:tryptophan-tRNA ligase activity"/>
    <property type="evidence" value="ECO:0000315"/>
    <property type="project" value="SGD"/>
</dbReference>
<dbReference type="GO" id="GO:0070183">
    <property type="term" value="P:mitochondrial tryptophanyl-tRNA aminoacylation"/>
    <property type="evidence" value="ECO:0000315"/>
    <property type="project" value="SGD"/>
</dbReference>
<dbReference type="CDD" id="cd00806">
    <property type="entry name" value="TrpRS_core"/>
    <property type="match status" value="1"/>
</dbReference>
<dbReference type="FunFam" id="3.40.50.620:FF:000082">
    <property type="entry name" value="MSW1p Mitochondrial tryptophanyl-tRNA synthetase"/>
    <property type="match status" value="1"/>
</dbReference>
<dbReference type="FunFam" id="1.10.240.10:FF:000002">
    <property type="entry name" value="Tryptophan--tRNA ligase"/>
    <property type="match status" value="1"/>
</dbReference>
<dbReference type="Gene3D" id="3.40.50.620">
    <property type="entry name" value="HUPs"/>
    <property type="match status" value="1"/>
</dbReference>
<dbReference type="Gene3D" id="1.10.240.10">
    <property type="entry name" value="Tyrosyl-Transfer RNA Synthetase"/>
    <property type="match status" value="1"/>
</dbReference>
<dbReference type="InterPro" id="IPR001412">
    <property type="entry name" value="aa-tRNA-synth_I_CS"/>
</dbReference>
<dbReference type="InterPro" id="IPR002305">
    <property type="entry name" value="aa-tRNA-synth_Ic"/>
</dbReference>
<dbReference type="InterPro" id="IPR014729">
    <property type="entry name" value="Rossmann-like_a/b/a_fold"/>
</dbReference>
<dbReference type="InterPro" id="IPR002306">
    <property type="entry name" value="Trp-tRNA-ligase"/>
</dbReference>
<dbReference type="InterPro" id="IPR050203">
    <property type="entry name" value="Trp-tRNA_synthetase"/>
</dbReference>
<dbReference type="NCBIfam" id="TIGR00233">
    <property type="entry name" value="trpS"/>
    <property type="match status" value="1"/>
</dbReference>
<dbReference type="PANTHER" id="PTHR43766">
    <property type="entry name" value="TRYPTOPHAN--TRNA LIGASE, MITOCHONDRIAL"/>
    <property type="match status" value="1"/>
</dbReference>
<dbReference type="PANTHER" id="PTHR43766:SF1">
    <property type="entry name" value="TRYPTOPHAN--TRNA LIGASE, MITOCHONDRIAL"/>
    <property type="match status" value="1"/>
</dbReference>
<dbReference type="Pfam" id="PF00579">
    <property type="entry name" value="tRNA-synt_1b"/>
    <property type="match status" value="1"/>
</dbReference>
<dbReference type="PRINTS" id="PR01039">
    <property type="entry name" value="TRNASYNTHTRP"/>
</dbReference>
<dbReference type="SUPFAM" id="SSF52374">
    <property type="entry name" value="Nucleotidylyl transferase"/>
    <property type="match status" value="1"/>
</dbReference>
<dbReference type="PROSITE" id="PS00178">
    <property type="entry name" value="AA_TRNA_LIGASE_I"/>
    <property type="match status" value="1"/>
</dbReference>
<evidence type="ECO:0000250" key="1"/>
<evidence type="ECO:0000250" key="2">
    <source>
        <dbReference type="UniProtKB" id="Q9UGM6"/>
    </source>
</evidence>
<evidence type="ECO:0000269" key="3">
    <source>
    </source>
</evidence>
<evidence type="ECO:0000269" key="4">
    <source>
    </source>
</evidence>
<evidence type="ECO:0000269" key="5">
    <source>
    </source>
</evidence>
<evidence type="ECO:0000305" key="6"/>
<evidence type="ECO:0000305" key="7">
    <source>
    </source>
</evidence>
<reference key="1">
    <citation type="journal article" date="1985" name="J. Biol. Chem.">
        <title>MSW, a yeast gene coding for mitochondrial tryptophanyl-tRNA synthetase.</title>
        <authorList>
            <person name="Myers A.M."/>
            <person name="Tzagoloff A."/>
        </authorList>
    </citation>
    <scope>NUCLEOTIDE SEQUENCE [GENOMIC DNA]</scope>
    <scope>FUNCTION</scope>
    <scope>CATALYTIC ACTIVITY</scope>
</reference>
<reference key="2">
    <citation type="journal article" date="1992" name="Curr. Genet.">
        <title>An yeast nuclear mutation conferring temperature-sensitivity to the mitochondrial tryptophanyl-tRNA synthetase.</title>
        <authorList>
            <person name="Entrup R."/>
            <person name="Langgut W."/>
            <person name="Lisowsky T."/>
            <person name="Schweizer E."/>
        </authorList>
    </citation>
    <scope>NUCLEOTIDE SEQUENCE [GENOMIC DNA]</scope>
</reference>
<reference key="3">
    <citation type="journal article" date="1997" name="Nature">
        <title>The nucleotide sequence of Saccharomyces cerevisiae chromosome IV.</title>
        <authorList>
            <person name="Jacq C."/>
            <person name="Alt-Moerbe J."/>
            <person name="Andre B."/>
            <person name="Arnold W."/>
            <person name="Bahr A."/>
            <person name="Ballesta J.P.G."/>
            <person name="Bargues M."/>
            <person name="Baron L."/>
            <person name="Becker A."/>
            <person name="Biteau N."/>
            <person name="Bloecker H."/>
            <person name="Blugeon C."/>
            <person name="Boskovic J."/>
            <person name="Brandt P."/>
            <person name="Brueckner M."/>
            <person name="Buitrago M.J."/>
            <person name="Coster F."/>
            <person name="Delaveau T."/>
            <person name="del Rey F."/>
            <person name="Dujon B."/>
            <person name="Eide L.G."/>
            <person name="Garcia-Cantalejo J.M."/>
            <person name="Goffeau A."/>
            <person name="Gomez-Peris A."/>
            <person name="Granotier C."/>
            <person name="Hanemann V."/>
            <person name="Hankeln T."/>
            <person name="Hoheisel J.D."/>
            <person name="Jaeger W."/>
            <person name="Jimenez A."/>
            <person name="Jonniaux J.-L."/>
            <person name="Kraemer C."/>
            <person name="Kuester H."/>
            <person name="Laamanen P."/>
            <person name="Legros Y."/>
            <person name="Louis E.J."/>
            <person name="Moeller-Rieker S."/>
            <person name="Monnet A."/>
            <person name="Moro M."/>
            <person name="Mueller-Auer S."/>
            <person name="Nussbaumer B."/>
            <person name="Paricio N."/>
            <person name="Paulin L."/>
            <person name="Perea J."/>
            <person name="Perez-Alonso M."/>
            <person name="Perez-Ortin J.E."/>
            <person name="Pohl T.M."/>
            <person name="Prydz H."/>
            <person name="Purnelle B."/>
            <person name="Rasmussen S.W."/>
            <person name="Remacha M.A."/>
            <person name="Revuelta J.L."/>
            <person name="Rieger M."/>
            <person name="Salom D."/>
            <person name="Saluz H.P."/>
            <person name="Saiz J.E."/>
            <person name="Saren A.-M."/>
            <person name="Schaefer M."/>
            <person name="Scharfe M."/>
            <person name="Schmidt E.R."/>
            <person name="Schneider C."/>
            <person name="Scholler P."/>
            <person name="Schwarz S."/>
            <person name="Soler-Mira A."/>
            <person name="Urrestarazu L.A."/>
            <person name="Verhasselt P."/>
            <person name="Vissers S."/>
            <person name="Voet M."/>
            <person name="Volckaert G."/>
            <person name="Wagner G."/>
            <person name="Wambutt R."/>
            <person name="Wedler E."/>
            <person name="Wedler H."/>
            <person name="Woelfl S."/>
            <person name="Harris D.E."/>
            <person name="Bowman S."/>
            <person name="Brown D."/>
            <person name="Churcher C.M."/>
            <person name="Connor R."/>
            <person name="Dedman K."/>
            <person name="Gentles S."/>
            <person name="Hamlin N."/>
            <person name="Hunt S."/>
            <person name="Jones L."/>
            <person name="McDonald S."/>
            <person name="Murphy L.D."/>
            <person name="Niblett D."/>
            <person name="Odell C."/>
            <person name="Oliver K."/>
            <person name="Rajandream M.A."/>
            <person name="Richards C."/>
            <person name="Shore L."/>
            <person name="Walsh S.V."/>
            <person name="Barrell B.G."/>
            <person name="Dietrich F.S."/>
            <person name="Mulligan J.T."/>
            <person name="Allen E."/>
            <person name="Araujo R."/>
            <person name="Aviles E."/>
            <person name="Berno A."/>
            <person name="Carpenter J."/>
            <person name="Chen E."/>
            <person name="Cherry J.M."/>
            <person name="Chung E."/>
            <person name="Duncan M."/>
            <person name="Hunicke-Smith S."/>
            <person name="Hyman R.W."/>
            <person name="Komp C."/>
            <person name="Lashkari D."/>
            <person name="Lew H."/>
            <person name="Lin D."/>
            <person name="Mosedale D."/>
            <person name="Nakahara K."/>
            <person name="Namath A."/>
            <person name="Oefner P."/>
            <person name="Oh C."/>
            <person name="Petel F.X."/>
            <person name="Roberts D."/>
            <person name="Schramm S."/>
            <person name="Schroeder M."/>
            <person name="Shogren T."/>
            <person name="Shroff N."/>
            <person name="Winant A."/>
            <person name="Yelton M.A."/>
            <person name="Botstein D."/>
            <person name="Davis R.W."/>
            <person name="Johnston M."/>
            <person name="Andrews S."/>
            <person name="Brinkman R."/>
            <person name="Cooper J."/>
            <person name="Ding H."/>
            <person name="Du Z."/>
            <person name="Favello A."/>
            <person name="Fulton L."/>
            <person name="Gattung S."/>
            <person name="Greco T."/>
            <person name="Hallsworth K."/>
            <person name="Hawkins J."/>
            <person name="Hillier L.W."/>
            <person name="Jier M."/>
            <person name="Johnson D."/>
            <person name="Johnston L."/>
            <person name="Kirsten J."/>
            <person name="Kucaba T."/>
            <person name="Langston Y."/>
            <person name="Latreille P."/>
            <person name="Le T."/>
            <person name="Mardis E."/>
            <person name="Menezes S."/>
            <person name="Miller N."/>
            <person name="Nhan M."/>
            <person name="Pauley A."/>
            <person name="Peluso D."/>
            <person name="Rifkin L."/>
            <person name="Riles L."/>
            <person name="Taich A."/>
            <person name="Trevaskis E."/>
            <person name="Vignati D."/>
            <person name="Wilcox L."/>
            <person name="Wohldman P."/>
            <person name="Vaudin M."/>
            <person name="Wilson R."/>
            <person name="Waterston R."/>
            <person name="Albermann K."/>
            <person name="Hani J."/>
            <person name="Heumann K."/>
            <person name="Kleine K."/>
            <person name="Mewes H.-W."/>
            <person name="Zollner A."/>
            <person name="Zaccaria P."/>
        </authorList>
    </citation>
    <scope>NUCLEOTIDE SEQUENCE [LARGE SCALE GENOMIC DNA]</scope>
    <source>
        <strain>ATCC 204508 / S288c</strain>
    </source>
</reference>
<reference key="4">
    <citation type="journal article" date="2014" name="G3 (Bethesda)">
        <title>The reference genome sequence of Saccharomyces cerevisiae: Then and now.</title>
        <authorList>
            <person name="Engel S.R."/>
            <person name="Dietrich F.S."/>
            <person name="Fisk D.G."/>
            <person name="Binkley G."/>
            <person name="Balakrishnan R."/>
            <person name="Costanzo M.C."/>
            <person name="Dwight S.S."/>
            <person name="Hitz B.C."/>
            <person name="Karra K."/>
            <person name="Nash R.S."/>
            <person name="Weng S."/>
            <person name="Wong E.D."/>
            <person name="Lloyd P."/>
            <person name="Skrzypek M.S."/>
            <person name="Miyasato S.R."/>
            <person name="Simison M."/>
            <person name="Cherry J.M."/>
        </authorList>
    </citation>
    <scope>GENOME REANNOTATION</scope>
    <source>
        <strain>ATCC 204508 / S288c</strain>
    </source>
</reference>
<reference key="5">
    <citation type="journal article" date="2003" name="Nature">
        <title>Global analysis of protein localization in budding yeast.</title>
        <authorList>
            <person name="Huh W.-K."/>
            <person name="Falvo J.V."/>
            <person name="Gerke L.C."/>
            <person name="Carroll A.S."/>
            <person name="Howson R.W."/>
            <person name="Weissman J.S."/>
            <person name="O'Shea E.K."/>
        </authorList>
    </citation>
    <scope>SUBCELLULAR LOCATION [LARGE SCALE ANALYSIS]</scope>
</reference>
<reference key="6">
    <citation type="journal article" date="2003" name="Nature">
        <title>Global analysis of protein expression in yeast.</title>
        <authorList>
            <person name="Ghaemmaghami S."/>
            <person name="Huh W.-K."/>
            <person name="Bower K."/>
            <person name="Howson R.W."/>
            <person name="Belle A."/>
            <person name="Dephoure N."/>
            <person name="O'Shea E.K."/>
            <person name="Weissman J.S."/>
        </authorList>
    </citation>
    <scope>LEVEL OF PROTEIN EXPRESSION [LARGE SCALE ANALYSIS]</scope>
</reference>
<reference key="7">
    <citation type="journal article" date="2003" name="Proc. Natl. Acad. Sci. U.S.A.">
        <title>The proteome of Saccharomyces cerevisiae mitochondria.</title>
        <authorList>
            <person name="Sickmann A."/>
            <person name="Reinders J."/>
            <person name="Wagner Y."/>
            <person name="Joppich C."/>
            <person name="Zahedi R.P."/>
            <person name="Meyer H.E."/>
            <person name="Schoenfisch B."/>
            <person name="Perschil I."/>
            <person name="Chacinska A."/>
            <person name="Guiard B."/>
            <person name="Rehling P."/>
            <person name="Pfanner N."/>
            <person name="Meisinger C."/>
        </authorList>
    </citation>
    <scope>SUBCELLULAR LOCATION [LARGE SCALE ANALYSIS]</scope>
    <source>
        <strain>ATCC 76625 / YPH499</strain>
    </source>
</reference>
<gene>
    <name type="primary">MSW1</name>
    <name type="synonym">MSW</name>
    <name type="ordered locus">YDR268W</name>
    <name type="ORF">D9954.7</name>
</gene>
<comment type="function">
    <text evidence="7">Mitochondrial aminoacyl-tRNA synthetase that catalyzes the attachment of tryptophan to tRNA(Trp).</text>
</comment>
<comment type="catalytic activity">
    <reaction evidence="7">
        <text>tRNA(Trp) + L-tryptophan + ATP = L-tryptophyl-tRNA(Trp) + AMP + diphosphate + H(+)</text>
        <dbReference type="Rhea" id="RHEA:24080"/>
        <dbReference type="Rhea" id="RHEA-COMP:9671"/>
        <dbReference type="Rhea" id="RHEA-COMP:9705"/>
        <dbReference type="ChEBI" id="CHEBI:15378"/>
        <dbReference type="ChEBI" id="CHEBI:30616"/>
        <dbReference type="ChEBI" id="CHEBI:33019"/>
        <dbReference type="ChEBI" id="CHEBI:57912"/>
        <dbReference type="ChEBI" id="CHEBI:78442"/>
        <dbReference type="ChEBI" id="CHEBI:78535"/>
        <dbReference type="ChEBI" id="CHEBI:456215"/>
        <dbReference type="EC" id="6.1.1.2"/>
    </reaction>
    <physiologicalReaction direction="left-to-right" evidence="7">
        <dbReference type="Rhea" id="RHEA:24081"/>
    </physiologicalReaction>
</comment>
<comment type="subunit">
    <text>Homodimer.</text>
</comment>
<comment type="subcellular location">
    <subcellularLocation>
        <location evidence="3 5">Mitochondrion matrix</location>
    </subcellularLocation>
</comment>
<comment type="miscellaneous">
    <text evidence="4">Present with 672 molecules/cell in log phase SD medium.</text>
</comment>
<comment type="similarity">
    <text evidence="6">Belongs to the class-I aminoacyl-tRNA synthetase family.</text>
</comment>
<sequence length="379" mass="43015">MSNKQAVLKLISKRWISTVQRADFKLNSEALHSNATVFSMIQPTGCFHLGNYLGATRVWTDLCELKQPGQELIFGVADLHAITVPKPDGEMFRKFRHEAVASILAVGVDPEKASVIYQSAIPQHSELHWLLSTLASMGLLNRMTQWKSKSNIKQSTNGDYLVNDSDVGKVRLGLFSYPVLQAADILLYKSTHVPVGDDQSQHLELTRHLAEKFNKMYKKNFFPKPVTMLAQTKKVLSLSTPEKKMSKSDPNHDSVIFLNDEPKAIQKKIRKALTDSISDRFYYDPVERPGVSNLINIVSGIQRKSIEDVVEDVSRFNNYRDFKDYVSEVIIEELKGPRTEFEKYINEPTYLHSVVESGMRKAREKAAKNLADIHKIMGF</sequence>
<name>SYWM_YEAST</name>
<protein>
    <recommendedName>
        <fullName>Tryptophan--tRNA ligase, mitochondrial</fullName>
        <ecNumber evidence="7">6.1.1.2</ecNumber>
    </recommendedName>
    <alternativeName>
        <fullName>Tryptophanyl-tRNA synthetase</fullName>
        <shortName>TrpRS</shortName>
    </alternativeName>
</protein>
<keyword id="KW-0030">Aminoacyl-tRNA synthetase</keyword>
<keyword id="KW-0067">ATP-binding</keyword>
<keyword id="KW-0436">Ligase</keyword>
<keyword id="KW-0496">Mitochondrion</keyword>
<keyword id="KW-0547">Nucleotide-binding</keyword>
<keyword id="KW-0648">Protein biosynthesis</keyword>
<keyword id="KW-1185">Reference proteome</keyword>
<accession>P04803</accession>
<accession>D6VSQ2</accession>
<organism>
    <name type="scientific">Saccharomyces cerevisiae (strain ATCC 204508 / S288c)</name>
    <name type="common">Baker's yeast</name>
    <dbReference type="NCBI Taxonomy" id="559292"/>
    <lineage>
        <taxon>Eukaryota</taxon>
        <taxon>Fungi</taxon>
        <taxon>Dikarya</taxon>
        <taxon>Ascomycota</taxon>
        <taxon>Saccharomycotina</taxon>
        <taxon>Saccharomycetes</taxon>
        <taxon>Saccharomycetales</taxon>
        <taxon>Saccharomycetaceae</taxon>
        <taxon>Saccharomyces</taxon>
    </lineage>
</organism>
<proteinExistence type="evidence at protein level"/>
<feature type="chain" id="PRO_0000136745" description="Tryptophan--tRNA ligase, mitochondrial">
    <location>
        <begin position="1"/>
        <end position="379"/>
    </location>
</feature>
<feature type="short sequence motif" description="'HIGH' region">
    <location>
        <begin position="43"/>
        <end position="51"/>
    </location>
</feature>
<feature type="short sequence motif" description="'KMSKS' region">
    <location>
        <begin position="244"/>
        <end position="248"/>
    </location>
</feature>
<feature type="binding site" evidence="2">
    <location>
        <position position="42"/>
    </location>
    <ligand>
        <name>ATP</name>
        <dbReference type="ChEBI" id="CHEBI:30616"/>
    </ligand>
</feature>
<feature type="binding site" evidence="2">
    <location>
        <begin position="48"/>
        <end position="51"/>
    </location>
    <ligand>
        <name>ATP</name>
        <dbReference type="ChEBI" id="CHEBI:30616"/>
    </ligand>
</feature>
<feature type="binding site" evidence="2">
    <location>
        <position position="184"/>
    </location>
    <ligand>
        <name>L-tryptophan</name>
        <dbReference type="ChEBI" id="CHEBI:57912"/>
    </ligand>
</feature>
<feature type="binding site" evidence="2">
    <location>
        <begin position="196"/>
        <end position="198"/>
    </location>
    <ligand>
        <name>ATP</name>
        <dbReference type="ChEBI" id="CHEBI:30616"/>
    </ligand>
</feature>
<feature type="binding site" evidence="2">
    <location>
        <position position="235"/>
    </location>
    <ligand>
        <name>ATP</name>
        <dbReference type="ChEBI" id="CHEBI:30616"/>
    </ligand>
</feature>
<feature type="binding site" evidence="2">
    <location>
        <begin position="244"/>
        <end position="248"/>
    </location>
    <ligand>
        <name>ATP</name>
        <dbReference type="ChEBI" id="CHEBI:30616"/>
    </ligand>
</feature>
<feature type="binding site" evidence="1">
    <location>
        <position position="247"/>
    </location>
    <ligand>
        <name>ATP</name>
        <dbReference type="ChEBI" id="CHEBI:30616"/>
    </ligand>
</feature>
<feature type="sequence conflict" description="In Ref. 1; AAA34809." evidence="6" ref="1">
    <original>KIRK</original>
    <variation>RLE</variation>
    <location>
        <begin position="268"/>
        <end position="271"/>
    </location>
</feature>
<feature type="sequence conflict" description="In Ref. 1; AAA34809." evidence="6" ref="1">
    <original>ADIHKIMGF</original>
    <variation>PTFIK</variation>
    <location>
        <begin position="371"/>
        <end position="379"/>
    </location>
</feature>